<keyword id="KW-0963">Cytoplasm</keyword>
<keyword id="KW-1185">Reference proteome</keyword>
<keyword id="KW-0690">Ribosome biogenesis</keyword>
<feature type="chain" id="PRO_0000384673" description="Ribosome maturation factor RimP">
    <location>
        <begin position="1"/>
        <end position="155"/>
    </location>
</feature>
<accession>C1A8N5</accession>
<sequence length="155" mass="16966">MGEAIEPIVTQELAGLGFDLVELRRGGSRARPVLEIRIDRRDEEKVTIDDCARVSRALEARLEAAALVGEQYVLEVSSPGADRPLRHAADWRRFVGRRATVTSGLLAGGKQEVEIVAVTGEGGAEVALVRDPKGREVSVPLREVSQARLAFNWKR</sequence>
<gene>
    <name evidence="1" type="primary">rimP</name>
    <name type="ordered locus">GAU_1553</name>
</gene>
<name>RIMP_GEMAT</name>
<comment type="function">
    <text evidence="1">Required for maturation of 30S ribosomal subunits.</text>
</comment>
<comment type="subcellular location">
    <subcellularLocation>
        <location evidence="1">Cytoplasm</location>
    </subcellularLocation>
</comment>
<comment type="similarity">
    <text evidence="1">Belongs to the RimP family.</text>
</comment>
<reference key="1">
    <citation type="submission" date="2006-03" db="EMBL/GenBank/DDBJ databases">
        <title>Complete genome sequence of Gemmatimonas aurantiaca T-27 that represents a novel phylum Gemmatimonadetes.</title>
        <authorList>
            <person name="Takasaki K."/>
            <person name="Ichikawa N."/>
            <person name="Miura H."/>
            <person name="Matsushita S."/>
            <person name="Watanabe Y."/>
            <person name="Oguchi A."/>
            <person name="Ankai A."/>
            <person name="Yashiro I."/>
            <person name="Takahashi M."/>
            <person name="Terui Y."/>
            <person name="Fukui S."/>
            <person name="Yokoyama H."/>
            <person name="Tanikawa S."/>
            <person name="Hanada S."/>
            <person name="Kamagata Y."/>
            <person name="Fujita N."/>
        </authorList>
    </citation>
    <scope>NUCLEOTIDE SEQUENCE [LARGE SCALE GENOMIC DNA]</scope>
    <source>
        <strain>DSM 14586 / JCM 11422 / NBRC 100505 / T-27</strain>
    </source>
</reference>
<proteinExistence type="inferred from homology"/>
<organism>
    <name type="scientific">Gemmatimonas aurantiaca (strain DSM 14586 / JCM 11422 / NBRC 100505 / T-27)</name>
    <dbReference type="NCBI Taxonomy" id="379066"/>
    <lineage>
        <taxon>Bacteria</taxon>
        <taxon>Pseudomonadati</taxon>
        <taxon>Gemmatimonadota</taxon>
        <taxon>Gemmatimonadia</taxon>
        <taxon>Gemmatimonadales</taxon>
        <taxon>Gemmatimonadaceae</taxon>
        <taxon>Gemmatimonas</taxon>
    </lineage>
</organism>
<dbReference type="EMBL" id="AP009153">
    <property type="protein sequence ID" value="BAH38595.1"/>
    <property type="molecule type" value="Genomic_DNA"/>
</dbReference>
<dbReference type="RefSeq" id="WP_012683042.1">
    <property type="nucleotide sequence ID" value="NC_012489.1"/>
</dbReference>
<dbReference type="SMR" id="C1A8N5"/>
<dbReference type="STRING" id="379066.GAU_1553"/>
<dbReference type="KEGG" id="gau:GAU_1553"/>
<dbReference type="eggNOG" id="COG0779">
    <property type="taxonomic scope" value="Bacteria"/>
</dbReference>
<dbReference type="HOGENOM" id="CLU_070525_3_1_0"/>
<dbReference type="Proteomes" id="UP000002209">
    <property type="component" value="Chromosome"/>
</dbReference>
<dbReference type="GO" id="GO:0005829">
    <property type="term" value="C:cytosol"/>
    <property type="evidence" value="ECO:0007669"/>
    <property type="project" value="TreeGrafter"/>
</dbReference>
<dbReference type="GO" id="GO:0000028">
    <property type="term" value="P:ribosomal small subunit assembly"/>
    <property type="evidence" value="ECO:0007669"/>
    <property type="project" value="TreeGrafter"/>
</dbReference>
<dbReference type="GO" id="GO:0006412">
    <property type="term" value="P:translation"/>
    <property type="evidence" value="ECO:0007669"/>
    <property type="project" value="TreeGrafter"/>
</dbReference>
<dbReference type="CDD" id="cd01734">
    <property type="entry name" value="YlxS_C"/>
    <property type="match status" value="1"/>
</dbReference>
<dbReference type="Gene3D" id="3.30.300.70">
    <property type="entry name" value="RimP-like superfamily, N-terminal"/>
    <property type="match status" value="1"/>
</dbReference>
<dbReference type="HAMAP" id="MF_01077">
    <property type="entry name" value="RimP"/>
    <property type="match status" value="1"/>
</dbReference>
<dbReference type="InterPro" id="IPR003728">
    <property type="entry name" value="Ribosome_maturation_RimP"/>
</dbReference>
<dbReference type="InterPro" id="IPR028998">
    <property type="entry name" value="RimP_C"/>
</dbReference>
<dbReference type="InterPro" id="IPR036847">
    <property type="entry name" value="RimP_C_sf"/>
</dbReference>
<dbReference type="InterPro" id="IPR028989">
    <property type="entry name" value="RimP_N"/>
</dbReference>
<dbReference type="InterPro" id="IPR035956">
    <property type="entry name" value="RimP_N_sf"/>
</dbReference>
<dbReference type="PANTHER" id="PTHR33867">
    <property type="entry name" value="RIBOSOME MATURATION FACTOR RIMP"/>
    <property type="match status" value="1"/>
</dbReference>
<dbReference type="PANTHER" id="PTHR33867:SF1">
    <property type="entry name" value="RIBOSOME MATURATION FACTOR RIMP"/>
    <property type="match status" value="1"/>
</dbReference>
<dbReference type="Pfam" id="PF17384">
    <property type="entry name" value="DUF150_C"/>
    <property type="match status" value="1"/>
</dbReference>
<dbReference type="Pfam" id="PF02576">
    <property type="entry name" value="RimP_N"/>
    <property type="match status" value="1"/>
</dbReference>
<dbReference type="SUPFAM" id="SSF74942">
    <property type="entry name" value="YhbC-like, C-terminal domain"/>
    <property type="match status" value="1"/>
</dbReference>
<dbReference type="SUPFAM" id="SSF75420">
    <property type="entry name" value="YhbC-like, N-terminal domain"/>
    <property type="match status" value="1"/>
</dbReference>
<evidence type="ECO:0000255" key="1">
    <source>
        <dbReference type="HAMAP-Rule" id="MF_01077"/>
    </source>
</evidence>
<protein>
    <recommendedName>
        <fullName evidence="1">Ribosome maturation factor RimP</fullName>
    </recommendedName>
</protein>